<feature type="chain" id="PRO_0000385135" description="Uncharacterized protein ORF124">
    <location>
        <begin position="1"/>
        <end position="474"/>
    </location>
</feature>
<organismHost>
    <name type="scientific">Magallana gigas</name>
    <name type="common">Pacific oyster</name>
    <name type="synonym">Crassostrea gigas</name>
    <dbReference type="NCBI Taxonomy" id="29159"/>
</organismHost>
<organismHost>
    <name type="scientific">Pecten maximus</name>
    <name type="common">King scallop</name>
    <name type="synonym">Pilgrim's clam</name>
    <dbReference type="NCBI Taxonomy" id="6579"/>
</organismHost>
<organism>
    <name type="scientific">Ostreid herpesvirus 1 (isolate France)</name>
    <name type="common">OsHV-1</name>
    <name type="synonym">Pacific oyster herpesvirus</name>
    <dbReference type="NCBI Taxonomy" id="654903"/>
    <lineage>
        <taxon>Viruses</taxon>
        <taxon>Duplodnaviria</taxon>
        <taxon>Heunggongvirae</taxon>
        <taxon>Peploviricota</taxon>
        <taxon>Herviviricetes</taxon>
        <taxon>Herpesvirales</taxon>
        <taxon>Malacoherpesviridae</taxon>
        <taxon>Ostreavirus</taxon>
        <taxon>Ostreavirus ostreidmalaco1</taxon>
        <taxon>Ostreid herpesvirus 1</taxon>
    </lineage>
</organism>
<keyword id="KW-1185">Reference proteome</keyword>
<reference key="1">
    <citation type="journal article" date="2005" name="J. Gen. Virol.">
        <title>A novel class of herpesvirus with bivalve hosts.</title>
        <authorList>
            <person name="Davison A.J."/>
            <person name="Trus B.L."/>
            <person name="Cheng N."/>
            <person name="Steven A.C."/>
            <person name="Watson M.S."/>
            <person name="Cunningham C."/>
            <person name="Le Deuff R.M."/>
            <person name="Renault T."/>
        </authorList>
    </citation>
    <scope>NUCLEOTIDE SEQUENCE [LARGE SCALE GENOMIC DNA]</scope>
</reference>
<sequence length="474" mass="54203">MEVINTLFKLAGTNQEHAQSAQPEPMIEEYFTTGYTPAEPIVVEEYFTRGVSSETIYVKDEEYDPASNWVVPKREEPKSPGPMVWLNESSADNGPNYKRVDRVTGETSLVTRDREDVRKMSLMLMDKHQDMLRGELLNFQNNINKSGSCLMCRKVKCTTVKSPCCGLDFCNTCITVMGRRFHAKNFDINKPMESDLINNESPIKEVPECPFCGNDFFNEDCQFSKIFMRDLLERCENDCGMEQFYIAKLKKRCAKRTKRINKNKRLAKDLSKKISHKIFRRIESEAGKISPGARGKFVANKIRENKGKVDFSVMTQKYYHYSAVDMVRYGCGLSGLTQVLDAEPRLTNGSCKDHKDDGFGIIPVHKHAYTGNFEPAILKLAIEREEFDIFNAVDNELNTVVHDIMNMPHPNGSDKYLPFLEKNVNLFSSVMDQQNDRGYTPRTLAKFGIMSCDKCDGNTCERGRILKEKYNVTV</sequence>
<name>Y124_OSHVF</name>
<protein>
    <recommendedName>
        <fullName>Uncharacterized protein ORF124</fullName>
    </recommendedName>
</protein>
<gene>
    <name type="ORF">ORF124</name>
</gene>
<dbReference type="EMBL" id="AY509253">
    <property type="protein sequence ID" value="AAS01013.1"/>
    <property type="molecule type" value="Genomic_DNA"/>
</dbReference>
<dbReference type="RefSeq" id="YP_024666.1">
    <property type="nucleotide sequence ID" value="NC_005881.2"/>
</dbReference>
<dbReference type="KEGG" id="vg:2948241"/>
<dbReference type="Proteomes" id="UP000007021">
    <property type="component" value="Segment"/>
</dbReference>
<dbReference type="Gene3D" id="3.30.40.10">
    <property type="entry name" value="Zinc/RING finger domain, C3HC4 (zinc finger)"/>
    <property type="match status" value="1"/>
</dbReference>
<dbReference type="InterPro" id="IPR013083">
    <property type="entry name" value="Znf_RING/FYVE/PHD"/>
</dbReference>
<accession>Q6R7A2</accession>
<proteinExistence type="predicted"/>